<name>MUTS2_STAAU</name>
<accession>Q9ZEH5</accession>
<comment type="function">
    <text evidence="1">Endonuclease that is involved in the suppression of homologous recombination and thus may have a key role in the control of bacterial genetic diversity.</text>
</comment>
<comment type="function">
    <text evidence="1">Acts as a ribosome collision sensor, splitting the ribosome into its 2 subunits. Detects stalled/collided 70S ribosomes which it binds and splits by an ATP-hydrolysis driven conformational change. Acts upstream of the ribosome quality control system (RQC), a ribosome-associated complex that mediates the extraction of incompletely synthesized nascent chains from stalled ribosomes and their subsequent degradation. Probably generates substrates for RQC.</text>
</comment>
<comment type="subunit">
    <text evidence="1">Homodimer. Binds to stalled ribosomes, contacting rRNA.</text>
</comment>
<comment type="similarity">
    <text evidence="1">Belongs to the DNA mismatch repair MutS family. MutS2 subfamily.</text>
</comment>
<protein>
    <recommendedName>
        <fullName evidence="1">Endonuclease MutS2</fullName>
        <ecNumber evidence="1">3.1.-.-</ecNumber>
    </recommendedName>
    <alternativeName>
        <fullName evidence="1">Ribosome-associated protein quality control-upstream factor</fullName>
        <shortName evidence="1">RQC-upstream factor</shortName>
        <shortName evidence="1">RqcU</shortName>
        <ecNumber evidence="1">3.6.4.-</ecNumber>
    </alternativeName>
</protein>
<keyword id="KW-0067">ATP-binding</keyword>
<keyword id="KW-0238">DNA-binding</keyword>
<keyword id="KW-0255">Endonuclease</keyword>
<keyword id="KW-0378">Hydrolase</keyword>
<keyword id="KW-0540">Nuclease</keyword>
<keyword id="KW-0547">Nucleotide-binding</keyword>
<keyword id="KW-0694">RNA-binding</keyword>
<keyword id="KW-0699">rRNA-binding</keyword>
<sequence length="719" mass="81300">SLSGLSKVSAFIHRADIGGVLNVSELNLIKRLIQVQNQFKTFYNQLVEEDEGVKYPILDDKMNQLPVLTDLFQQINETCDTYDLYDNASYELQGIRSKISSTNQRIRQNLDRIVKSQANQKKLSDAIVTVRNERNVIPVKAEYRQDFNGIVHDQSASGQTLYIEPSSVVEMNNQISRLRHDEAIEKERILTQLTGYVAADKDALLVAEQVMGQLDFLIAKARYSRSIKGTKPIFKEERTVYLPKAYHPLLNRETVVANTIEFMEDIETVIITGPNTGGKTVTLKTLGLIIVMAQSGLLIPTLDGSQLSVFKNVYCDIGDEQSIEQSLSTFSSHMTNIVEILKNADKHSLVLFDELGAGTDPSEGAALAMSILDHVRKIGSLVMATTHYPELKAYSYNREGVMNASVEFDVDTLSPTYKLLMGVPGRSNAFDISKKLGLSLNIINKAKTMIGTDEKEINEMIESLERNYKRVETQRLELDRLVKEAEQVHDDLSKQYQQFQNYEKSLIEDAKEKANQKIKAATKEADDIIKDLRQLREQKGADVKEHELIDKKKRLDDHYEAKSIKQNVQKQKYDKIVAGDEVKVLSYGQKGEVLEIVNDEEAIVQMGIIKMKLPIEDLEKKQKEKVKPTKMVTRQNRQTIKTELDLRGYRYEDALIELDQYLDQAVLSNYEQVYIIHGKGTGALQKGVQQHLKKHKSVSDFRGGMPSEGGFGVTVATLK</sequence>
<gene>
    <name evidence="1" type="primary">mutS2</name>
    <name type="synonym">mutSB</name>
    <name evidence="1" type="synonym">rqcU</name>
</gene>
<dbReference type="EC" id="3.1.-.-" evidence="1"/>
<dbReference type="EC" id="3.6.4.-" evidence="1"/>
<dbReference type="EMBL" id="AJ223480">
    <property type="protein sequence ID" value="CAA11403.1"/>
    <property type="molecule type" value="Genomic_DNA"/>
</dbReference>
<dbReference type="SMR" id="Q9ZEH5"/>
<dbReference type="GO" id="GO:0005524">
    <property type="term" value="F:ATP binding"/>
    <property type="evidence" value="ECO:0007669"/>
    <property type="project" value="UniProtKB-KW"/>
</dbReference>
<dbReference type="GO" id="GO:0016887">
    <property type="term" value="F:ATP hydrolysis activity"/>
    <property type="evidence" value="ECO:0007669"/>
    <property type="project" value="InterPro"/>
</dbReference>
<dbReference type="GO" id="GO:0140664">
    <property type="term" value="F:ATP-dependent DNA damage sensor activity"/>
    <property type="evidence" value="ECO:0007669"/>
    <property type="project" value="InterPro"/>
</dbReference>
<dbReference type="GO" id="GO:0004519">
    <property type="term" value="F:endonuclease activity"/>
    <property type="evidence" value="ECO:0007669"/>
    <property type="project" value="UniProtKB-KW"/>
</dbReference>
<dbReference type="GO" id="GO:0030983">
    <property type="term" value="F:mismatched DNA binding"/>
    <property type="evidence" value="ECO:0007669"/>
    <property type="project" value="InterPro"/>
</dbReference>
<dbReference type="GO" id="GO:0019843">
    <property type="term" value="F:rRNA binding"/>
    <property type="evidence" value="ECO:0007669"/>
    <property type="project" value="UniProtKB-KW"/>
</dbReference>
<dbReference type="GO" id="GO:0006298">
    <property type="term" value="P:mismatch repair"/>
    <property type="evidence" value="ECO:0007669"/>
    <property type="project" value="InterPro"/>
</dbReference>
<dbReference type="GO" id="GO:0045910">
    <property type="term" value="P:negative regulation of DNA recombination"/>
    <property type="evidence" value="ECO:0007669"/>
    <property type="project" value="InterPro"/>
</dbReference>
<dbReference type="CDD" id="cd03280">
    <property type="entry name" value="ABC_MutS2"/>
    <property type="match status" value="1"/>
</dbReference>
<dbReference type="FunFam" id="3.30.1370.110:FF:000006">
    <property type="entry name" value="Endonuclease MutS2"/>
    <property type="match status" value="1"/>
</dbReference>
<dbReference type="FunFam" id="3.40.50.300:FF:000830">
    <property type="entry name" value="Endonuclease MutS2"/>
    <property type="match status" value="1"/>
</dbReference>
<dbReference type="Gene3D" id="3.30.1370.110">
    <property type="match status" value="1"/>
</dbReference>
<dbReference type="Gene3D" id="3.40.50.300">
    <property type="entry name" value="P-loop containing nucleotide triphosphate hydrolases"/>
    <property type="match status" value="1"/>
</dbReference>
<dbReference type="HAMAP" id="MF_00092">
    <property type="entry name" value="MutS2"/>
    <property type="match status" value="1"/>
</dbReference>
<dbReference type="InterPro" id="IPR000432">
    <property type="entry name" value="DNA_mismatch_repair_MutS_C"/>
</dbReference>
<dbReference type="InterPro" id="IPR007696">
    <property type="entry name" value="DNA_mismatch_repair_MutS_core"/>
</dbReference>
<dbReference type="InterPro" id="IPR036187">
    <property type="entry name" value="DNA_mismatch_repair_MutS_sf"/>
</dbReference>
<dbReference type="InterPro" id="IPR046893">
    <property type="entry name" value="MSSS"/>
</dbReference>
<dbReference type="InterPro" id="IPR045076">
    <property type="entry name" value="MutS"/>
</dbReference>
<dbReference type="InterPro" id="IPR005747">
    <property type="entry name" value="MutS2"/>
</dbReference>
<dbReference type="InterPro" id="IPR027417">
    <property type="entry name" value="P-loop_NTPase"/>
</dbReference>
<dbReference type="InterPro" id="IPR002625">
    <property type="entry name" value="Smr_dom"/>
</dbReference>
<dbReference type="InterPro" id="IPR036063">
    <property type="entry name" value="Smr_dom_sf"/>
</dbReference>
<dbReference type="NCBIfam" id="TIGR01069">
    <property type="entry name" value="mutS2"/>
    <property type="match status" value="1"/>
</dbReference>
<dbReference type="PANTHER" id="PTHR48466:SF2">
    <property type="entry name" value="OS10G0509000 PROTEIN"/>
    <property type="match status" value="1"/>
</dbReference>
<dbReference type="PANTHER" id="PTHR48466">
    <property type="entry name" value="OS10G0509000 PROTEIN-RELATED"/>
    <property type="match status" value="1"/>
</dbReference>
<dbReference type="Pfam" id="PF20297">
    <property type="entry name" value="MSSS"/>
    <property type="match status" value="1"/>
</dbReference>
<dbReference type="Pfam" id="PF00488">
    <property type="entry name" value="MutS_V"/>
    <property type="match status" value="1"/>
</dbReference>
<dbReference type="Pfam" id="PF01713">
    <property type="entry name" value="Smr"/>
    <property type="match status" value="1"/>
</dbReference>
<dbReference type="PIRSF" id="PIRSF005814">
    <property type="entry name" value="MutS_YshD"/>
    <property type="match status" value="1"/>
</dbReference>
<dbReference type="SMART" id="SM00534">
    <property type="entry name" value="MUTSac"/>
    <property type="match status" value="1"/>
</dbReference>
<dbReference type="SMART" id="SM00533">
    <property type="entry name" value="MUTSd"/>
    <property type="match status" value="1"/>
</dbReference>
<dbReference type="SMART" id="SM00463">
    <property type="entry name" value="SMR"/>
    <property type="match status" value="1"/>
</dbReference>
<dbReference type="SUPFAM" id="SSF48334">
    <property type="entry name" value="DNA repair protein MutS, domain III"/>
    <property type="match status" value="1"/>
</dbReference>
<dbReference type="SUPFAM" id="SSF52540">
    <property type="entry name" value="P-loop containing nucleoside triphosphate hydrolases"/>
    <property type="match status" value="1"/>
</dbReference>
<dbReference type="SUPFAM" id="SSF160443">
    <property type="entry name" value="SMR domain-like"/>
    <property type="match status" value="1"/>
</dbReference>
<dbReference type="PROSITE" id="PS00486">
    <property type="entry name" value="DNA_MISMATCH_REPAIR_2"/>
    <property type="match status" value="1"/>
</dbReference>
<dbReference type="PROSITE" id="PS50828">
    <property type="entry name" value="SMR"/>
    <property type="match status" value="1"/>
</dbReference>
<organism>
    <name type="scientific">Staphylococcus aureus</name>
    <dbReference type="NCBI Taxonomy" id="1280"/>
    <lineage>
        <taxon>Bacteria</taxon>
        <taxon>Bacillati</taxon>
        <taxon>Bacillota</taxon>
        <taxon>Bacilli</taxon>
        <taxon>Bacillales</taxon>
        <taxon>Staphylococcaceae</taxon>
        <taxon>Staphylococcus</taxon>
    </lineage>
</organism>
<proteinExistence type="inferred from homology"/>
<reference key="1">
    <citation type="submission" date="1998-01" db="EMBL/GenBank/DDBJ databases">
        <title>Transcriptional analysis of the thioredoxin (trxA) and thioredoxin reductase (trxB) genes in Staphylococcus aureus.</title>
        <authorList>
            <person name="Uziel O."/>
            <person name="Borovok I."/>
            <person name="Schreiber R."/>
            <person name="Cohen G."/>
            <person name="Aharonowitz Y."/>
        </authorList>
    </citation>
    <scope>NUCLEOTIDE SEQUENCE [GENOMIC DNA]</scope>
    <source>
        <strain>ATCC 9144 / DSM 683 / NCIB 6571 / NCTC 6571 / NRRL B-314 / Oxford</strain>
    </source>
</reference>
<evidence type="ECO:0000255" key="1">
    <source>
        <dbReference type="HAMAP-Rule" id="MF_00092"/>
    </source>
</evidence>
<feature type="chain" id="PRO_0000115232" description="Endonuclease MutS2">
    <location>
        <begin position="1" status="less than"/>
        <end position="719"/>
    </location>
</feature>
<feature type="domain" description="Smr" evidence="1">
    <location>
        <begin position="644"/>
        <end position="719"/>
    </location>
</feature>
<feature type="binding site" evidence="1">
    <location>
        <begin position="273"/>
        <end position="280"/>
    </location>
    <ligand>
        <name>ATP</name>
        <dbReference type="ChEBI" id="CHEBI:30616"/>
    </ligand>
</feature>
<feature type="non-terminal residue">
    <location>
        <position position="1"/>
    </location>
</feature>